<gene>
    <name type="primary">SKP2</name>
    <name type="ordered locus">YNL311C</name>
    <name type="ORF">N0376</name>
</gene>
<dbReference type="EMBL" id="Z46259">
    <property type="protein sequence ID" value="CAA86384.1"/>
    <property type="molecule type" value="Genomic_DNA"/>
</dbReference>
<dbReference type="EMBL" id="Z71587">
    <property type="protein sequence ID" value="CAA96240.1"/>
    <property type="molecule type" value="Genomic_DNA"/>
</dbReference>
<dbReference type="EMBL" id="AY692711">
    <property type="protein sequence ID" value="AAT92730.1"/>
    <property type="molecule type" value="Genomic_DNA"/>
</dbReference>
<dbReference type="EMBL" id="BK006947">
    <property type="protein sequence ID" value="DAA10250.1"/>
    <property type="molecule type" value="Genomic_DNA"/>
</dbReference>
<dbReference type="PIR" id="S51300">
    <property type="entry name" value="S51300"/>
</dbReference>
<dbReference type="RefSeq" id="NP_014088.1">
    <property type="nucleotide sequence ID" value="NM_001183149.1"/>
</dbReference>
<dbReference type="BioGRID" id="35528">
    <property type="interactions" value="100"/>
</dbReference>
<dbReference type="DIP" id="DIP-1971N"/>
<dbReference type="FunCoup" id="P42843">
    <property type="interactions" value="109"/>
</dbReference>
<dbReference type="IntAct" id="P42843">
    <property type="interactions" value="28"/>
</dbReference>
<dbReference type="MINT" id="P42843"/>
<dbReference type="STRING" id="4932.YNL311C"/>
<dbReference type="GlyGen" id="P42843">
    <property type="glycosylation" value="1 site"/>
</dbReference>
<dbReference type="iPTMnet" id="P42843"/>
<dbReference type="PaxDb" id="4932-YNL311C"/>
<dbReference type="PeptideAtlas" id="P42843"/>
<dbReference type="EnsemblFungi" id="YNL311C_mRNA">
    <property type="protein sequence ID" value="YNL311C"/>
    <property type="gene ID" value="YNL311C"/>
</dbReference>
<dbReference type="GeneID" id="855405"/>
<dbReference type="KEGG" id="sce:YNL311C"/>
<dbReference type="AGR" id="SGD:S000005255"/>
<dbReference type="SGD" id="S000005255">
    <property type="gene designation" value="SKP2"/>
</dbReference>
<dbReference type="VEuPathDB" id="FungiDB:YNL311C"/>
<dbReference type="eggNOG" id="ENOG502QTPK">
    <property type="taxonomic scope" value="Eukaryota"/>
</dbReference>
<dbReference type="HOGENOM" id="CLU_409412_0_0_1"/>
<dbReference type="InParanoid" id="P42843"/>
<dbReference type="OMA" id="FKIPLWY"/>
<dbReference type="OrthoDB" id="4032719at2759"/>
<dbReference type="BioCyc" id="YEAST:G3O-33298-MONOMER"/>
<dbReference type="UniPathway" id="UPA00143"/>
<dbReference type="BioGRID-ORCS" id="855405">
    <property type="hits" value="1 hit in 10 CRISPR screens"/>
</dbReference>
<dbReference type="PRO" id="PR:P42843"/>
<dbReference type="Proteomes" id="UP000002311">
    <property type="component" value="Chromosome XIV"/>
</dbReference>
<dbReference type="RNAct" id="P42843">
    <property type="molecule type" value="protein"/>
</dbReference>
<dbReference type="GO" id="GO:0005737">
    <property type="term" value="C:cytoplasm"/>
    <property type="evidence" value="ECO:0007669"/>
    <property type="project" value="UniProtKB-SubCell"/>
</dbReference>
<dbReference type="GO" id="GO:0019005">
    <property type="term" value="C:SCF ubiquitin ligase complex"/>
    <property type="evidence" value="ECO:0000314"/>
    <property type="project" value="SGD"/>
</dbReference>
<dbReference type="GO" id="GO:0030674">
    <property type="term" value="F:protein-macromolecule adaptor activity"/>
    <property type="evidence" value="ECO:0000247"/>
    <property type="project" value="SGD"/>
</dbReference>
<dbReference type="GO" id="GO:0030163">
    <property type="term" value="P:protein catabolic process"/>
    <property type="evidence" value="ECO:0000315"/>
    <property type="project" value="SGD"/>
</dbReference>
<dbReference type="GO" id="GO:0016567">
    <property type="term" value="P:protein ubiquitination"/>
    <property type="evidence" value="ECO:0007669"/>
    <property type="project" value="UniProtKB-UniPathway"/>
</dbReference>
<dbReference type="GO" id="GO:0031335">
    <property type="term" value="P:regulation of sulfur amino acid metabolic process"/>
    <property type="evidence" value="ECO:0000315"/>
    <property type="project" value="SGD"/>
</dbReference>
<dbReference type="CDD" id="cd09917">
    <property type="entry name" value="F-box_SF"/>
    <property type="match status" value="1"/>
</dbReference>
<dbReference type="Gene3D" id="1.20.1280.50">
    <property type="match status" value="1"/>
</dbReference>
<dbReference type="InterPro" id="IPR036047">
    <property type="entry name" value="F-box-like_dom_sf"/>
</dbReference>
<dbReference type="InterPro" id="IPR001810">
    <property type="entry name" value="F-box_dom"/>
</dbReference>
<dbReference type="Pfam" id="PF12937">
    <property type="entry name" value="F-box-like"/>
    <property type="match status" value="1"/>
</dbReference>
<dbReference type="SMART" id="SM00256">
    <property type="entry name" value="FBOX"/>
    <property type="match status" value="1"/>
</dbReference>
<dbReference type="SUPFAM" id="SSF81383">
    <property type="entry name" value="F-box domain"/>
    <property type="match status" value="1"/>
</dbReference>
<dbReference type="PROSITE" id="PS50181">
    <property type="entry name" value="FBOX"/>
    <property type="match status" value="1"/>
</dbReference>
<organism>
    <name type="scientific">Saccharomyces cerevisiae (strain ATCC 204508 / S288c)</name>
    <name type="common">Baker's yeast</name>
    <dbReference type="NCBI Taxonomy" id="559292"/>
    <lineage>
        <taxon>Eukaryota</taxon>
        <taxon>Fungi</taxon>
        <taxon>Dikarya</taxon>
        <taxon>Ascomycota</taxon>
        <taxon>Saccharomycotina</taxon>
        <taxon>Saccharomycetes</taxon>
        <taxon>Saccharomycetales</taxon>
        <taxon>Saccharomycetaceae</taxon>
        <taxon>Saccharomyces</taxon>
    </lineage>
</organism>
<feature type="chain" id="PRO_0000203366" description="F-box protein SKP2">
    <location>
        <begin position="1"/>
        <end position="763"/>
    </location>
</feature>
<feature type="domain" description="F-box" evidence="2">
    <location>
        <begin position="54"/>
        <end position="100"/>
    </location>
</feature>
<feature type="modified residue" description="Phosphothreonine" evidence="9">
    <location>
        <position position="594"/>
    </location>
</feature>
<feature type="sequence conflict" description="In Ref. 4; AAT92730." evidence="8" ref="4">
    <original>V</original>
    <variation>A</variation>
    <location>
        <position position="16"/>
    </location>
</feature>
<protein>
    <recommendedName>
        <fullName>F-box protein SKP2</fullName>
    </recommendedName>
</protein>
<comment type="function">
    <text evidence="1 7">Substrate recognition component of a SCF (SKP1-CUL1-F-box protein) E3 ubiquitin-protein ligase complex which mediates the ubiquitination and subsequent proteasomal degradation of target proteins. Probably recognizes and binds to phosphorylated target proteins (By similarity). Regulates protein levels of sulfur metabolism enzymes. The SCF(SKP2) complex may regulate some transcription factors or regulators of cysteine and methionine biosynthesis.</text>
</comment>
<comment type="pathway">
    <text>Protein modification; protein ubiquitination.</text>
</comment>
<comment type="subunit">
    <text evidence="5 6">Interacts with SKP1. Component of the probable SCF(SKP2) complex containing CDC53, SKP1, RBX1 and SKP2. May interact with ribosomes.</text>
</comment>
<comment type="interaction">
    <interactant intactId="EBI-28370">
        <id>P42843</id>
    </interactant>
    <interactant intactId="EBI-4090">
        <id>P52286</id>
        <label>SKP1</label>
    </interactant>
    <organismsDiffer>false</organismsDiffer>
    <experiments>6</experiments>
</comment>
<comment type="subcellular location">
    <subcellularLocation>
        <location evidence="3">Cytoplasm</location>
    </subcellularLocation>
</comment>
<comment type="disruption phenotype">
    <text evidence="7">Stabilizes the adenosylphosphosulfate kinase MET14 which leads to accumulation H(2)S and SO(2).</text>
</comment>
<comment type="miscellaneous">
    <text evidence="4">Present with 432 molecules/cell in log phase SD medium.</text>
</comment>
<sequence>MKRLQLFGRSKYFSLVSSAAKEEEEEEEGCADAKSLLHSTSHDIKSRSLRFNDKSSLMCLPTKVLLLILRTLDFNTLVTLCQVNSRFYNLITNEFLFQNVILDSKLSLLKFNALIHSEFHTSNIVTHSGDCSTQSRSQNARFLVRSIEFKNPQSQDSLLKYSKFYNKSGQDSIIAGSYKLDSYDKDVKKLNNIRLNDETPIITSERIKLLDKLESNYFHYTYIELMLDIIDYLPNLTRVILSDVEPNFKIPLWYSVFNDGSRDFFKKIIKGQQSITNEDLRTFQLSKKFVKEYESKYYSLPRLKILEIKANNKRQRTFNRQRHHQKLVLRPSLFCCFGIINELKLENVTIDTESLDTPMEFLPLFLKNEDNELYSLQSPITALTLDSCDVVPGNGILRLFHSYFKMVKHLSLLKINSKFDLLLCSCFPSLSNLTIDCNSKCFTNEQVVGESYYFQQRSLDTEDDFDDCNSMTETLFEAPSDSKIITPPPTSSVVLSLNLNYISRTTGNDVSNNPSPDNNKKPAMLTAAQLQNFQRQRIPEFHSFYHYYRLLWERLPSKNISINVINIPFTNVYPLSPLSFWEHLARTITSVDETDEDVGDENDQETLIGYENNSIRDNIPNANAVPNLSTVMSPESDIHHTYYWNNSVRRCLRDSLIKLKNRTIEYRDLDVEEFLQNVTLENFFNDFQDPENFKDIPNINLWCFLRNLSKFKAVKIRMLRHFSLCTPRTRYDWELLLKPVLRVNVPIEVRDKDGFVLYSYGQK</sequence>
<accession>P42843</accession>
<accession>D6W0N4</accession>
<accession>Q6B2L9</accession>
<keyword id="KW-0963">Cytoplasm</keyword>
<keyword id="KW-0597">Phosphoprotein</keyword>
<keyword id="KW-1185">Reference proteome</keyword>
<keyword id="KW-0833">Ubl conjugation pathway</keyword>
<proteinExistence type="evidence at protein level"/>
<name>SKP2_YEAST</name>
<evidence type="ECO:0000250" key="1"/>
<evidence type="ECO:0000255" key="2">
    <source>
        <dbReference type="PROSITE-ProRule" id="PRU00080"/>
    </source>
</evidence>
<evidence type="ECO:0000269" key="3">
    <source>
    </source>
</evidence>
<evidence type="ECO:0000269" key="4">
    <source>
    </source>
</evidence>
<evidence type="ECO:0000269" key="5">
    <source>
    </source>
</evidence>
<evidence type="ECO:0000269" key="6">
    <source>
    </source>
</evidence>
<evidence type="ECO:0000269" key="7">
    <source>
    </source>
</evidence>
<evidence type="ECO:0000305" key="8"/>
<evidence type="ECO:0007744" key="9">
    <source>
    </source>
</evidence>
<reference key="1">
    <citation type="journal article" date="1995" name="Yeast">
        <title>Sequencing analysis of a 24.7 kb fragment of yeast chromosome XIV identifies six known genes, a new member of the hexose transporter family and ten new open reading frames.</title>
        <authorList>
            <person name="Maftahi M."/>
            <person name="Nicaud J.-M."/>
            <person name="Levesque H."/>
            <person name="Gaillardin C."/>
        </authorList>
    </citation>
    <scope>NUCLEOTIDE SEQUENCE [GENOMIC DNA]</scope>
    <source>
        <strain>S288c / FY1676</strain>
    </source>
</reference>
<reference key="2">
    <citation type="journal article" date="1997" name="Nature">
        <title>The nucleotide sequence of Saccharomyces cerevisiae chromosome XIV and its evolutionary implications.</title>
        <authorList>
            <person name="Philippsen P."/>
            <person name="Kleine K."/>
            <person name="Poehlmann R."/>
            <person name="Duesterhoeft A."/>
            <person name="Hamberg K."/>
            <person name="Hegemann J.H."/>
            <person name="Obermaier B."/>
            <person name="Urrestarazu L.A."/>
            <person name="Aert R."/>
            <person name="Albermann K."/>
            <person name="Altmann R."/>
            <person name="Andre B."/>
            <person name="Baladron V."/>
            <person name="Ballesta J.P.G."/>
            <person name="Becam A.-M."/>
            <person name="Beinhauer J.D."/>
            <person name="Boskovic J."/>
            <person name="Buitrago M.J."/>
            <person name="Bussereau F."/>
            <person name="Coster F."/>
            <person name="Crouzet M."/>
            <person name="D'Angelo M."/>
            <person name="Dal Pero F."/>
            <person name="De Antoni A."/>
            <person name="del Rey F."/>
            <person name="Doignon F."/>
            <person name="Domdey H."/>
            <person name="Dubois E."/>
            <person name="Fiedler T.A."/>
            <person name="Fleig U."/>
            <person name="Floeth M."/>
            <person name="Fritz C."/>
            <person name="Gaillardin C."/>
            <person name="Garcia-Cantalejo J.M."/>
            <person name="Glansdorff N."/>
            <person name="Goffeau A."/>
            <person name="Gueldener U."/>
            <person name="Herbert C.J."/>
            <person name="Heumann K."/>
            <person name="Heuss-Neitzel D."/>
            <person name="Hilbert H."/>
            <person name="Hinni K."/>
            <person name="Iraqui Houssaini I."/>
            <person name="Jacquet M."/>
            <person name="Jimenez A."/>
            <person name="Jonniaux J.-L."/>
            <person name="Karpfinger-Hartl L."/>
            <person name="Lanfranchi G."/>
            <person name="Lepingle A."/>
            <person name="Levesque H."/>
            <person name="Lyck R."/>
            <person name="Maftahi M."/>
            <person name="Mallet L."/>
            <person name="Maurer C.T.C."/>
            <person name="Messenguy F."/>
            <person name="Mewes H.-W."/>
            <person name="Moestl D."/>
            <person name="Nasr F."/>
            <person name="Nicaud J.-M."/>
            <person name="Niedenthal R.K."/>
            <person name="Pandolfo D."/>
            <person name="Pierard A."/>
            <person name="Piravandi E."/>
            <person name="Planta R.J."/>
            <person name="Pohl T.M."/>
            <person name="Purnelle B."/>
            <person name="Rebischung C."/>
            <person name="Remacha M.A."/>
            <person name="Revuelta J.L."/>
            <person name="Rinke M."/>
            <person name="Saiz J.E."/>
            <person name="Sartorello F."/>
            <person name="Scherens B."/>
            <person name="Sen-Gupta M."/>
            <person name="Soler-Mira A."/>
            <person name="Urbanus J.H.M."/>
            <person name="Valle G."/>
            <person name="Van Dyck L."/>
            <person name="Verhasselt P."/>
            <person name="Vierendeels F."/>
            <person name="Vissers S."/>
            <person name="Voet M."/>
            <person name="Volckaert G."/>
            <person name="Wach A."/>
            <person name="Wambutt R."/>
            <person name="Wedler H."/>
            <person name="Zollner A."/>
            <person name="Hani J."/>
        </authorList>
    </citation>
    <scope>NUCLEOTIDE SEQUENCE [LARGE SCALE GENOMIC DNA]</scope>
    <source>
        <strain>ATCC 204508 / S288c</strain>
    </source>
</reference>
<reference key="3">
    <citation type="journal article" date="2014" name="G3 (Bethesda)">
        <title>The reference genome sequence of Saccharomyces cerevisiae: Then and now.</title>
        <authorList>
            <person name="Engel S.R."/>
            <person name="Dietrich F.S."/>
            <person name="Fisk D.G."/>
            <person name="Binkley G."/>
            <person name="Balakrishnan R."/>
            <person name="Costanzo M.C."/>
            <person name="Dwight S.S."/>
            <person name="Hitz B.C."/>
            <person name="Karra K."/>
            <person name="Nash R.S."/>
            <person name="Weng S."/>
            <person name="Wong E.D."/>
            <person name="Lloyd P."/>
            <person name="Skrzypek M.S."/>
            <person name="Miyasato S.R."/>
            <person name="Simison M."/>
            <person name="Cherry J.M."/>
        </authorList>
    </citation>
    <scope>GENOME REANNOTATION</scope>
    <source>
        <strain>ATCC 204508 / S288c</strain>
    </source>
</reference>
<reference key="4">
    <citation type="journal article" date="2007" name="Genome Res.">
        <title>Approaching a complete repository of sequence-verified protein-encoding clones for Saccharomyces cerevisiae.</title>
        <authorList>
            <person name="Hu Y."/>
            <person name="Rolfs A."/>
            <person name="Bhullar B."/>
            <person name="Murthy T.V.S."/>
            <person name="Zhu C."/>
            <person name="Berger M.F."/>
            <person name="Camargo A.A."/>
            <person name="Kelley F."/>
            <person name="McCarron S."/>
            <person name="Jepson D."/>
            <person name="Richardson A."/>
            <person name="Raphael J."/>
            <person name="Moreira D."/>
            <person name="Taycher E."/>
            <person name="Zuo D."/>
            <person name="Mohr S."/>
            <person name="Kane M.F."/>
            <person name="Williamson J."/>
            <person name="Simpson A.J.G."/>
            <person name="Bulyk M.L."/>
            <person name="Harlow E."/>
            <person name="Marsischky G."/>
            <person name="Kolodner R.D."/>
            <person name="LaBaer J."/>
        </authorList>
    </citation>
    <scope>NUCLEOTIDE SEQUENCE [GENOMIC DNA]</scope>
    <source>
        <strain>ATCC 204508 / S288c</strain>
    </source>
</reference>
<reference key="5">
    <citation type="journal article" date="2003" name="Nature">
        <title>Global analysis of protein localization in budding yeast.</title>
        <authorList>
            <person name="Huh W.-K."/>
            <person name="Falvo J.V."/>
            <person name="Gerke L.C."/>
            <person name="Carroll A.S."/>
            <person name="Howson R.W."/>
            <person name="Weissman J.S."/>
            <person name="O'Shea E.K."/>
        </authorList>
    </citation>
    <scope>SUBCELLULAR LOCATION [LARGE SCALE ANALYSIS]</scope>
</reference>
<reference key="6">
    <citation type="journal article" date="2003" name="Nature">
        <title>Global analysis of protein expression in yeast.</title>
        <authorList>
            <person name="Ghaemmaghami S."/>
            <person name="Huh W.-K."/>
            <person name="Bower K."/>
            <person name="Howson R.W."/>
            <person name="Belle A."/>
            <person name="Dephoure N."/>
            <person name="O'Shea E.K."/>
            <person name="Weissman J.S."/>
        </authorList>
    </citation>
    <scope>LEVEL OF PROTEIN EXPRESSION [LARGE SCALE ANALYSIS]</scope>
</reference>
<reference key="7">
    <citation type="journal article" date="2004" name="Proteins">
        <title>Functional interaction of 13 yeast SCF complexes with a set of yeast E2 enzymes in vitro.</title>
        <authorList>
            <person name="Kus B.M."/>
            <person name="Caldon C.E."/>
            <person name="Andorn-Broza R."/>
            <person name="Edwards A.M."/>
        </authorList>
    </citation>
    <scope>INTERACTION WITH SKP1</scope>
    <scope>RECONSTITUTION OF THE SCF(SKP2) COMPLEX</scope>
</reference>
<reference key="8">
    <citation type="journal article" date="2006" name="Genes Dev.">
        <title>Systematic identification and functional screens of uncharacterized proteins associated with eukaryotic ribosomal complexes.</title>
        <authorList>
            <person name="Fleischer T.C."/>
            <person name="Weaver C.M."/>
            <person name="McAfee K.J."/>
            <person name="Jennings J.L."/>
            <person name="Link A.J."/>
        </authorList>
    </citation>
    <scope>IDENTIFICATION BY MASS SPECTROMETRY</scope>
</reference>
<reference key="9">
    <citation type="journal article" date="2006" name="Mol. Cell. Proteomics">
        <title>A tandem affinity tag for two-step purification under fully denaturing conditions: application in ubiquitin profiling and protein complex identification combined with in vivocross-linking.</title>
        <authorList>
            <person name="Tagwerker C."/>
            <person name="Flick K."/>
            <person name="Cui M."/>
            <person name="Guerrero C."/>
            <person name="Dou Y."/>
            <person name="Auer B."/>
            <person name="Baldi P."/>
            <person name="Huang L."/>
            <person name="Kaiser P."/>
        </authorList>
    </citation>
    <scope>IDENTIFICATION BY MASS SPECTROMETRY</scope>
    <scope>INTERACTION WITH SKP1</scope>
</reference>
<reference key="10">
    <citation type="journal article" date="2009" name="Science">
        <title>Global analysis of Cdk1 substrate phosphorylation sites provides insights into evolution.</title>
        <authorList>
            <person name="Holt L.J."/>
            <person name="Tuch B.B."/>
            <person name="Villen J."/>
            <person name="Johnson A.D."/>
            <person name="Gygi S.P."/>
            <person name="Morgan D.O."/>
        </authorList>
    </citation>
    <scope>PHOSPHORYLATION [LARGE SCALE ANALYSIS] AT THR-594</scope>
    <scope>IDENTIFICATION BY MASS SPECTROMETRY [LARGE SCALE ANALYSIS]</scope>
</reference>
<reference key="11">
    <citation type="journal article" date="2011" name="Yeast">
        <title>A novel mechanism regulates H(2) S and SO(2) production in Saccharomyces cerevisiae.</title>
        <authorList>
            <person name="Yoshida S."/>
            <person name="Imoto J."/>
            <person name="Minato T."/>
            <person name="Oouchi R."/>
            <person name="Kamada Y."/>
            <person name="Tomita M."/>
            <person name="Soga T."/>
            <person name="Yoshimoto H."/>
        </authorList>
    </citation>
    <scope>DISRUPTION PHENOTYPE</scope>
    <scope>FUNCTION OF THE SCF(SKP2) COMPLEX</scope>
</reference>